<proteinExistence type="inferred from homology"/>
<feature type="chain" id="PRO_1000075305" description="Putative [LysW]-aminoadipate/[LysW]-glutamate kinase">
    <location>
        <begin position="1"/>
        <end position="258"/>
    </location>
</feature>
<feature type="binding site" evidence="1">
    <location>
        <begin position="33"/>
        <end position="34"/>
    </location>
    <ligand>
        <name>substrate</name>
    </ligand>
</feature>
<feature type="binding site" evidence="1">
    <location>
        <position position="60"/>
    </location>
    <ligand>
        <name>substrate</name>
    </ligand>
</feature>
<feature type="binding site" evidence="1">
    <location>
        <position position="164"/>
    </location>
    <ligand>
        <name>substrate</name>
    </ligand>
</feature>
<feature type="site" description="Transition state stabilizer" evidence="1">
    <location>
        <position position="5"/>
    </location>
</feature>
<feature type="site" description="Transition state stabilizer" evidence="1">
    <location>
        <position position="221"/>
    </location>
</feature>
<accession>A8M8Q8</accession>
<name>LYSZ_CALMQ</name>
<protein>
    <recommendedName>
        <fullName evidence="1">Putative [LysW]-aminoadipate/[LysW]-glutamate kinase</fullName>
        <ecNumber evidence="1">2.7.2.17</ecNumber>
        <ecNumber evidence="1">2.7.2.19</ecNumber>
    </recommendedName>
</protein>
<evidence type="ECO:0000255" key="1">
    <source>
        <dbReference type="HAMAP-Rule" id="MF_02082"/>
    </source>
</evidence>
<dbReference type="EC" id="2.7.2.17" evidence="1"/>
<dbReference type="EC" id="2.7.2.19" evidence="1"/>
<dbReference type="EMBL" id="CP000852">
    <property type="protein sequence ID" value="ABW02127.1"/>
    <property type="molecule type" value="Genomic_DNA"/>
</dbReference>
<dbReference type="RefSeq" id="WP_012186346.1">
    <property type="nucleotide sequence ID" value="NC_009954.1"/>
</dbReference>
<dbReference type="SMR" id="A8M8Q8"/>
<dbReference type="STRING" id="397948.Cmaq_1300"/>
<dbReference type="GeneID" id="5708965"/>
<dbReference type="KEGG" id="cma:Cmaq_1300"/>
<dbReference type="eggNOG" id="arCOG00862">
    <property type="taxonomic scope" value="Archaea"/>
</dbReference>
<dbReference type="HOGENOM" id="CLU_053680_2_0_2"/>
<dbReference type="OrthoDB" id="6816at2157"/>
<dbReference type="UniPathway" id="UPA00033">
    <property type="reaction ID" value="UER00036"/>
</dbReference>
<dbReference type="UniPathway" id="UPA00068"/>
<dbReference type="Proteomes" id="UP000001137">
    <property type="component" value="Chromosome"/>
</dbReference>
<dbReference type="GO" id="GO:0005737">
    <property type="term" value="C:cytoplasm"/>
    <property type="evidence" value="ECO:0007669"/>
    <property type="project" value="UniProtKB-SubCell"/>
</dbReference>
<dbReference type="GO" id="GO:0003991">
    <property type="term" value="F:acetylglutamate kinase activity"/>
    <property type="evidence" value="ECO:0007669"/>
    <property type="project" value="TreeGrafter"/>
</dbReference>
<dbReference type="GO" id="GO:0005524">
    <property type="term" value="F:ATP binding"/>
    <property type="evidence" value="ECO:0007669"/>
    <property type="project" value="UniProtKB-KW"/>
</dbReference>
<dbReference type="GO" id="GO:0043744">
    <property type="term" value="F:N2-acetyl-L-aminoadipate kinase activity"/>
    <property type="evidence" value="ECO:0007669"/>
    <property type="project" value="RHEA"/>
</dbReference>
<dbReference type="GO" id="GO:0042450">
    <property type="term" value="P:arginine biosynthetic process via ornithine"/>
    <property type="evidence" value="ECO:0007669"/>
    <property type="project" value="UniProtKB-UniRule"/>
</dbReference>
<dbReference type="GO" id="GO:0006526">
    <property type="term" value="P:L-arginine biosynthetic process"/>
    <property type="evidence" value="ECO:0007669"/>
    <property type="project" value="UniProtKB-UniPathway"/>
</dbReference>
<dbReference type="GO" id="GO:0019878">
    <property type="term" value="P:lysine biosynthetic process via aminoadipic acid"/>
    <property type="evidence" value="ECO:0007669"/>
    <property type="project" value="UniProtKB-UniRule"/>
</dbReference>
<dbReference type="Gene3D" id="3.40.1160.10">
    <property type="entry name" value="Acetylglutamate kinase-like"/>
    <property type="match status" value="1"/>
</dbReference>
<dbReference type="HAMAP" id="MF_02082">
    <property type="entry name" value="LysZ"/>
    <property type="match status" value="1"/>
</dbReference>
<dbReference type="InterPro" id="IPR036393">
    <property type="entry name" value="AceGlu_kinase-like_sf"/>
</dbReference>
<dbReference type="InterPro" id="IPR004662">
    <property type="entry name" value="AcgluKinase_fam"/>
</dbReference>
<dbReference type="InterPro" id="IPR001048">
    <property type="entry name" value="Asp/Glu/Uridylate_kinase"/>
</dbReference>
<dbReference type="InterPro" id="IPR037529">
    <property type="entry name" value="LysZ"/>
</dbReference>
<dbReference type="NCBIfam" id="TIGR00761">
    <property type="entry name" value="argB"/>
    <property type="match status" value="1"/>
</dbReference>
<dbReference type="NCBIfam" id="NF010662">
    <property type="entry name" value="PRK14058.1-4"/>
    <property type="match status" value="1"/>
</dbReference>
<dbReference type="PANTHER" id="PTHR23342">
    <property type="entry name" value="N-ACETYLGLUTAMATE SYNTHASE"/>
    <property type="match status" value="1"/>
</dbReference>
<dbReference type="PANTHER" id="PTHR23342:SF0">
    <property type="entry name" value="N-ACETYLGLUTAMATE SYNTHASE, MITOCHONDRIAL"/>
    <property type="match status" value="1"/>
</dbReference>
<dbReference type="Pfam" id="PF00696">
    <property type="entry name" value="AA_kinase"/>
    <property type="match status" value="1"/>
</dbReference>
<dbReference type="PIRSF" id="PIRSF000728">
    <property type="entry name" value="NAGK"/>
    <property type="match status" value="1"/>
</dbReference>
<dbReference type="SUPFAM" id="SSF53633">
    <property type="entry name" value="Carbamate kinase-like"/>
    <property type="match status" value="1"/>
</dbReference>
<organism>
    <name type="scientific">Caldivirga maquilingensis (strain ATCC 700844 / DSM 13496 / JCM 10307 / IC-167)</name>
    <dbReference type="NCBI Taxonomy" id="397948"/>
    <lineage>
        <taxon>Archaea</taxon>
        <taxon>Thermoproteota</taxon>
        <taxon>Thermoprotei</taxon>
        <taxon>Thermoproteales</taxon>
        <taxon>Thermoproteaceae</taxon>
        <taxon>Caldivirga</taxon>
    </lineage>
</organism>
<sequence>MILVKLGGSVICGGGLDNVTNDVEPGTVLIHGGGCMVNSVMERMGVKPVILKHPNGYTSRYTDEETLKAYVMTMMLINKLIVSKLNARGIRAIGLSGVDLGLVTAKRKERVMIIDERGRTRVIDGGFSGRVTGVNVNIMNLMLSNSDVVVVSPIALSQEGLMLNVDGDQIAENIAISMNVKELVILTNVDGVLVNGKPIDKVTKANAQEILQYTTGGMRRKLETALKLTELGVRTIIANGLRDKPIRSALNGLGTVVE</sequence>
<gene>
    <name evidence="1" type="primary">lysZ</name>
    <name type="ordered locus">Cmaq_1300</name>
</gene>
<keyword id="KW-0028">Amino-acid biosynthesis</keyword>
<keyword id="KW-0055">Arginine biosynthesis</keyword>
<keyword id="KW-0067">ATP-binding</keyword>
<keyword id="KW-0963">Cytoplasm</keyword>
<keyword id="KW-0418">Kinase</keyword>
<keyword id="KW-0457">Lysine biosynthesis</keyword>
<keyword id="KW-0547">Nucleotide-binding</keyword>
<keyword id="KW-1185">Reference proteome</keyword>
<keyword id="KW-0808">Transferase</keyword>
<reference key="1">
    <citation type="submission" date="2007-10" db="EMBL/GenBank/DDBJ databases">
        <title>Complete sequence of Caldivirga maquilingensis IC-167.</title>
        <authorList>
            <consortium name="US DOE Joint Genome Institute"/>
            <person name="Copeland A."/>
            <person name="Lucas S."/>
            <person name="Lapidus A."/>
            <person name="Barry K."/>
            <person name="Glavina del Rio T."/>
            <person name="Dalin E."/>
            <person name="Tice H."/>
            <person name="Pitluck S."/>
            <person name="Saunders E."/>
            <person name="Brettin T."/>
            <person name="Bruce D."/>
            <person name="Detter J.C."/>
            <person name="Han C."/>
            <person name="Schmutz J."/>
            <person name="Larimer F."/>
            <person name="Land M."/>
            <person name="Hauser L."/>
            <person name="Kyrpides N."/>
            <person name="Ivanova N."/>
            <person name="Biddle J.F."/>
            <person name="Zhang Z."/>
            <person name="Fitz-Gibbon S.T."/>
            <person name="Lowe T.M."/>
            <person name="Saltikov C."/>
            <person name="House C.H."/>
            <person name="Richardson P."/>
        </authorList>
    </citation>
    <scope>NUCLEOTIDE SEQUENCE [LARGE SCALE GENOMIC DNA]</scope>
    <source>
        <strain>ATCC 700844 / DSM 13496 / JCM 10307 / IC-167</strain>
    </source>
</reference>
<comment type="function">
    <text evidence="1">Involved in both the arginine and lysine biosynthetic pathways. Phosphorylates the LysW-bound precursors glutamate (for arginine biosynthesis), respectively alpha-aminoadipate (for lysine biosynthesis).</text>
</comment>
<comment type="catalytic activity">
    <reaction evidence="1">
        <text>[amino-group carrier protein]-C-terminal-N-(1,4-dicarboxybutan-1-yl)-L-glutamine + ATP = [amino-group carrier protein]-C-terminal-N-(1-carboxy-5-phosphooxy-5-oxopentan-1-yl)-L-glutamine + ADP</text>
        <dbReference type="Rhea" id="RHEA:41944"/>
        <dbReference type="Rhea" id="RHEA-COMP:9694"/>
        <dbReference type="Rhea" id="RHEA-COMP:9712"/>
        <dbReference type="ChEBI" id="CHEBI:30616"/>
        <dbReference type="ChEBI" id="CHEBI:78499"/>
        <dbReference type="ChEBI" id="CHEBI:78503"/>
        <dbReference type="ChEBI" id="CHEBI:456216"/>
        <dbReference type="EC" id="2.7.2.17"/>
    </reaction>
</comment>
<comment type="catalytic activity">
    <reaction evidence="1">
        <text>[amino-group carrier protein]-C-terminal-gamma-(L-glutamyl)-L-glutamate + ATP = [amino-group carrier protein]-C-terminal-gamma-(5-phospho-L-glutamyl)-L-glutamate + ADP</text>
        <dbReference type="Rhea" id="RHEA:52632"/>
        <dbReference type="Rhea" id="RHEA-COMP:13311"/>
        <dbReference type="Rhea" id="RHEA-COMP:13313"/>
        <dbReference type="ChEBI" id="CHEBI:30616"/>
        <dbReference type="ChEBI" id="CHEBI:136714"/>
        <dbReference type="ChEBI" id="CHEBI:136717"/>
        <dbReference type="ChEBI" id="CHEBI:456216"/>
        <dbReference type="EC" id="2.7.2.19"/>
    </reaction>
</comment>
<comment type="pathway">
    <text evidence="1">Amino-acid biosynthesis; L-lysine biosynthesis via AAA pathway; L-lysine from L-alpha-aminoadipate (Thermus route): step 2/5.</text>
</comment>
<comment type="pathway">
    <text evidence="1">Amino-acid biosynthesis; L-arginine biosynthesis.</text>
</comment>
<comment type="subcellular location">
    <subcellularLocation>
        <location evidence="1">Cytoplasm</location>
    </subcellularLocation>
</comment>
<comment type="similarity">
    <text evidence="1">Belongs to the acetylglutamate kinase family. LysZ subfamily.</text>
</comment>